<evidence type="ECO:0000255" key="1">
    <source>
        <dbReference type="HAMAP-Rule" id="MF_00191"/>
    </source>
</evidence>
<dbReference type="EC" id="1.17.7.4" evidence="1"/>
<dbReference type="EMBL" id="CP000011">
    <property type="protein sequence ID" value="AAU45677.1"/>
    <property type="molecule type" value="Genomic_DNA"/>
</dbReference>
<dbReference type="RefSeq" id="YP_106485.1">
    <property type="nucleotide sequence ID" value="NC_006349.2"/>
</dbReference>
<dbReference type="SMR" id="Q629Z7"/>
<dbReference type="KEGG" id="bma:BMAA1962"/>
<dbReference type="PATRIC" id="fig|243160.12.peg.5581"/>
<dbReference type="eggNOG" id="COG0761">
    <property type="taxonomic scope" value="Bacteria"/>
</dbReference>
<dbReference type="HOGENOM" id="CLU_027486_1_0_4"/>
<dbReference type="UniPathway" id="UPA00056">
    <property type="reaction ID" value="UER00097"/>
</dbReference>
<dbReference type="UniPathway" id="UPA00059">
    <property type="reaction ID" value="UER00105"/>
</dbReference>
<dbReference type="Proteomes" id="UP000006693">
    <property type="component" value="Chromosome 2"/>
</dbReference>
<dbReference type="GO" id="GO:0051539">
    <property type="term" value="F:4 iron, 4 sulfur cluster binding"/>
    <property type="evidence" value="ECO:0007669"/>
    <property type="project" value="UniProtKB-UniRule"/>
</dbReference>
<dbReference type="GO" id="GO:0051745">
    <property type="term" value="F:4-hydroxy-3-methylbut-2-enyl diphosphate reductase activity"/>
    <property type="evidence" value="ECO:0007669"/>
    <property type="project" value="UniProtKB-UniRule"/>
</dbReference>
<dbReference type="GO" id="GO:0046872">
    <property type="term" value="F:metal ion binding"/>
    <property type="evidence" value="ECO:0007669"/>
    <property type="project" value="UniProtKB-KW"/>
</dbReference>
<dbReference type="GO" id="GO:0050992">
    <property type="term" value="P:dimethylallyl diphosphate biosynthetic process"/>
    <property type="evidence" value="ECO:0007669"/>
    <property type="project" value="UniProtKB-UniRule"/>
</dbReference>
<dbReference type="GO" id="GO:0019288">
    <property type="term" value="P:isopentenyl diphosphate biosynthetic process, methylerythritol 4-phosphate pathway"/>
    <property type="evidence" value="ECO:0007669"/>
    <property type="project" value="UniProtKB-UniRule"/>
</dbReference>
<dbReference type="GO" id="GO:0016114">
    <property type="term" value="P:terpenoid biosynthetic process"/>
    <property type="evidence" value="ECO:0007669"/>
    <property type="project" value="UniProtKB-UniRule"/>
</dbReference>
<dbReference type="CDD" id="cd13944">
    <property type="entry name" value="lytB_ispH"/>
    <property type="match status" value="1"/>
</dbReference>
<dbReference type="Gene3D" id="3.40.50.11270">
    <property type="match status" value="1"/>
</dbReference>
<dbReference type="Gene3D" id="3.40.1010.20">
    <property type="entry name" value="4-hydroxy-3-methylbut-2-enyl diphosphate reductase, catalytic domain"/>
    <property type="match status" value="2"/>
</dbReference>
<dbReference type="HAMAP" id="MF_00191">
    <property type="entry name" value="IspH"/>
    <property type="match status" value="1"/>
</dbReference>
<dbReference type="InterPro" id="IPR003451">
    <property type="entry name" value="LytB/IspH"/>
</dbReference>
<dbReference type="NCBIfam" id="TIGR00216">
    <property type="entry name" value="ispH_lytB"/>
    <property type="match status" value="1"/>
</dbReference>
<dbReference type="NCBIfam" id="NF002188">
    <property type="entry name" value="PRK01045.1-2"/>
    <property type="match status" value="1"/>
</dbReference>
<dbReference type="NCBIfam" id="NF002190">
    <property type="entry name" value="PRK01045.1-4"/>
    <property type="match status" value="1"/>
</dbReference>
<dbReference type="PANTHER" id="PTHR30426">
    <property type="entry name" value="4-HYDROXY-3-METHYLBUT-2-ENYL DIPHOSPHATE REDUCTASE"/>
    <property type="match status" value="1"/>
</dbReference>
<dbReference type="PANTHER" id="PTHR30426:SF0">
    <property type="entry name" value="4-HYDROXY-3-METHYLBUT-2-ENYL DIPHOSPHATE REDUCTASE"/>
    <property type="match status" value="1"/>
</dbReference>
<dbReference type="Pfam" id="PF02401">
    <property type="entry name" value="LYTB"/>
    <property type="match status" value="1"/>
</dbReference>
<accession>Q629Z7</accession>
<sequence>MRVILAQPRGFCAGVVRAIEIVERALQQNGAPVYVRHEIVHNRHVVENLRNKGARFVEELDEVPHGAVAIFSAHGVAQTVEQDAQARGLDVLDATCPLVTKVHVQGRQYVAAGRRLILIGHAGHPEVEGTIGQIPAEVILVQSEAEVDTLTLPADTPVAYVTQTTLSVDDTRGIIEALQRRFTDIVGPDTRDICYATQNRQAAVRELSEQVDVLLVVGATNSSNSNRLREIGTESGVPSYLVADGSEVRAEWFANARTVGLTAGASAPEEMVEDVIAALRALGPLEVATMSGREEKVEFKLPAKLTQAVAREV</sequence>
<proteinExistence type="inferred from homology"/>
<reference key="1">
    <citation type="journal article" date="2004" name="Proc. Natl. Acad. Sci. U.S.A.">
        <title>Structural flexibility in the Burkholderia mallei genome.</title>
        <authorList>
            <person name="Nierman W.C."/>
            <person name="DeShazer D."/>
            <person name="Kim H.S."/>
            <person name="Tettelin H."/>
            <person name="Nelson K.E."/>
            <person name="Feldblyum T.V."/>
            <person name="Ulrich R.L."/>
            <person name="Ronning C.M."/>
            <person name="Brinkac L.M."/>
            <person name="Daugherty S.C."/>
            <person name="Davidsen T.D."/>
            <person name="DeBoy R.T."/>
            <person name="Dimitrov G."/>
            <person name="Dodson R.J."/>
            <person name="Durkin A.S."/>
            <person name="Gwinn M.L."/>
            <person name="Haft D.H."/>
            <person name="Khouri H.M."/>
            <person name="Kolonay J.F."/>
            <person name="Madupu R."/>
            <person name="Mohammoud Y."/>
            <person name="Nelson W.C."/>
            <person name="Radune D."/>
            <person name="Romero C.M."/>
            <person name="Sarria S."/>
            <person name="Selengut J."/>
            <person name="Shamblin C."/>
            <person name="Sullivan S.A."/>
            <person name="White O."/>
            <person name="Yu Y."/>
            <person name="Zafar N."/>
            <person name="Zhou L."/>
            <person name="Fraser C.M."/>
        </authorList>
    </citation>
    <scope>NUCLEOTIDE SEQUENCE [LARGE SCALE GENOMIC DNA]</scope>
    <source>
        <strain>ATCC 23344</strain>
    </source>
</reference>
<gene>
    <name evidence="1" type="primary">ispH1</name>
    <name type="synonym">ispH-1</name>
    <name type="ordered locus">BMAA1962</name>
</gene>
<organism>
    <name type="scientific">Burkholderia mallei (strain ATCC 23344)</name>
    <dbReference type="NCBI Taxonomy" id="243160"/>
    <lineage>
        <taxon>Bacteria</taxon>
        <taxon>Pseudomonadati</taxon>
        <taxon>Pseudomonadota</taxon>
        <taxon>Betaproteobacteria</taxon>
        <taxon>Burkholderiales</taxon>
        <taxon>Burkholderiaceae</taxon>
        <taxon>Burkholderia</taxon>
        <taxon>pseudomallei group</taxon>
    </lineage>
</organism>
<protein>
    <recommendedName>
        <fullName evidence="1">4-hydroxy-3-methylbut-2-enyl diphosphate reductase 1</fullName>
        <shortName evidence="1">HMBPP reductase 1</shortName>
        <ecNumber evidence="1">1.17.7.4</ecNumber>
    </recommendedName>
</protein>
<keyword id="KW-0004">4Fe-4S</keyword>
<keyword id="KW-0408">Iron</keyword>
<keyword id="KW-0411">Iron-sulfur</keyword>
<keyword id="KW-0414">Isoprene biosynthesis</keyword>
<keyword id="KW-0479">Metal-binding</keyword>
<keyword id="KW-0560">Oxidoreductase</keyword>
<keyword id="KW-1185">Reference proteome</keyword>
<feature type="chain" id="PRO_0000128791" description="4-hydroxy-3-methylbut-2-enyl diphosphate reductase 1">
    <location>
        <begin position="1"/>
        <end position="313"/>
    </location>
</feature>
<feature type="active site" description="Proton donor" evidence="1">
    <location>
        <position position="126"/>
    </location>
</feature>
<feature type="binding site" evidence="1">
    <location>
        <position position="12"/>
    </location>
    <ligand>
        <name>[4Fe-4S] cluster</name>
        <dbReference type="ChEBI" id="CHEBI:49883"/>
    </ligand>
</feature>
<feature type="binding site" evidence="1">
    <location>
        <position position="41"/>
    </location>
    <ligand>
        <name>(2E)-4-hydroxy-3-methylbut-2-enyl diphosphate</name>
        <dbReference type="ChEBI" id="CHEBI:128753"/>
    </ligand>
</feature>
<feature type="binding site" evidence="1">
    <location>
        <position position="41"/>
    </location>
    <ligand>
        <name>dimethylallyl diphosphate</name>
        <dbReference type="ChEBI" id="CHEBI:57623"/>
    </ligand>
</feature>
<feature type="binding site" evidence="1">
    <location>
        <position position="41"/>
    </location>
    <ligand>
        <name>isopentenyl diphosphate</name>
        <dbReference type="ChEBI" id="CHEBI:128769"/>
    </ligand>
</feature>
<feature type="binding site" evidence="1">
    <location>
        <position position="74"/>
    </location>
    <ligand>
        <name>(2E)-4-hydroxy-3-methylbut-2-enyl diphosphate</name>
        <dbReference type="ChEBI" id="CHEBI:128753"/>
    </ligand>
</feature>
<feature type="binding site" evidence="1">
    <location>
        <position position="74"/>
    </location>
    <ligand>
        <name>dimethylallyl diphosphate</name>
        <dbReference type="ChEBI" id="CHEBI:57623"/>
    </ligand>
</feature>
<feature type="binding site" evidence="1">
    <location>
        <position position="74"/>
    </location>
    <ligand>
        <name>isopentenyl diphosphate</name>
        <dbReference type="ChEBI" id="CHEBI:128769"/>
    </ligand>
</feature>
<feature type="binding site" evidence="1">
    <location>
        <position position="96"/>
    </location>
    <ligand>
        <name>[4Fe-4S] cluster</name>
        <dbReference type="ChEBI" id="CHEBI:49883"/>
    </ligand>
</feature>
<feature type="binding site" evidence="1">
    <location>
        <position position="124"/>
    </location>
    <ligand>
        <name>(2E)-4-hydroxy-3-methylbut-2-enyl diphosphate</name>
        <dbReference type="ChEBI" id="CHEBI:128753"/>
    </ligand>
</feature>
<feature type="binding site" evidence="1">
    <location>
        <position position="124"/>
    </location>
    <ligand>
        <name>dimethylallyl diphosphate</name>
        <dbReference type="ChEBI" id="CHEBI:57623"/>
    </ligand>
</feature>
<feature type="binding site" evidence="1">
    <location>
        <position position="124"/>
    </location>
    <ligand>
        <name>isopentenyl diphosphate</name>
        <dbReference type="ChEBI" id="CHEBI:128769"/>
    </ligand>
</feature>
<feature type="binding site" evidence="1">
    <location>
        <position position="164"/>
    </location>
    <ligand>
        <name>(2E)-4-hydroxy-3-methylbut-2-enyl diphosphate</name>
        <dbReference type="ChEBI" id="CHEBI:128753"/>
    </ligand>
</feature>
<feature type="binding site" evidence="1">
    <location>
        <position position="194"/>
    </location>
    <ligand>
        <name>[4Fe-4S] cluster</name>
        <dbReference type="ChEBI" id="CHEBI:49883"/>
    </ligand>
</feature>
<feature type="binding site" evidence="1">
    <location>
        <position position="222"/>
    </location>
    <ligand>
        <name>(2E)-4-hydroxy-3-methylbut-2-enyl diphosphate</name>
        <dbReference type="ChEBI" id="CHEBI:128753"/>
    </ligand>
</feature>
<feature type="binding site" evidence="1">
    <location>
        <position position="222"/>
    </location>
    <ligand>
        <name>dimethylallyl diphosphate</name>
        <dbReference type="ChEBI" id="CHEBI:57623"/>
    </ligand>
</feature>
<feature type="binding site" evidence="1">
    <location>
        <position position="222"/>
    </location>
    <ligand>
        <name>isopentenyl diphosphate</name>
        <dbReference type="ChEBI" id="CHEBI:128769"/>
    </ligand>
</feature>
<feature type="binding site" evidence="1">
    <location>
        <position position="223"/>
    </location>
    <ligand>
        <name>(2E)-4-hydroxy-3-methylbut-2-enyl diphosphate</name>
        <dbReference type="ChEBI" id="CHEBI:128753"/>
    </ligand>
</feature>
<feature type="binding site" evidence="1">
    <location>
        <position position="223"/>
    </location>
    <ligand>
        <name>dimethylallyl diphosphate</name>
        <dbReference type="ChEBI" id="CHEBI:57623"/>
    </ligand>
</feature>
<feature type="binding site" evidence="1">
    <location>
        <position position="223"/>
    </location>
    <ligand>
        <name>isopentenyl diphosphate</name>
        <dbReference type="ChEBI" id="CHEBI:128769"/>
    </ligand>
</feature>
<feature type="binding site" evidence="1">
    <location>
        <position position="224"/>
    </location>
    <ligand>
        <name>(2E)-4-hydroxy-3-methylbut-2-enyl diphosphate</name>
        <dbReference type="ChEBI" id="CHEBI:128753"/>
    </ligand>
</feature>
<feature type="binding site" evidence="1">
    <location>
        <position position="224"/>
    </location>
    <ligand>
        <name>dimethylallyl diphosphate</name>
        <dbReference type="ChEBI" id="CHEBI:57623"/>
    </ligand>
</feature>
<feature type="binding site" evidence="1">
    <location>
        <position position="224"/>
    </location>
    <ligand>
        <name>isopentenyl diphosphate</name>
        <dbReference type="ChEBI" id="CHEBI:128769"/>
    </ligand>
</feature>
<feature type="binding site" evidence="1">
    <location>
        <position position="266"/>
    </location>
    <ligand>
        <name>(2E)-4-hydroxy-3-methylbut-2-enyl diphosphate</name>
        <dbReference type="ChEBI" id="CHEBI:128753"/>
    </ligand>
</feature>
<feature type="binding site" evidence="1">
    <location>
        <position position="266"/>
    </location>
    <ligand>
        <name>dimethylallyl diphosphate</name>
        <dbReference type="ChEBI" id="CHEBI:57623"/>
    </ligand>
</feature>
<feature type="binding site" evidence="1">
    <location>
        <position position="266"/>
    </location>
    <ligand>
        <name>isopentenyl diphosphate</name>
        <dbReference type="ChEBI" id="CHEBI:128769"/>
    </ligand>
</feature>
<name>ISPH1_BURMA</name>
<comment type="function">
    <text evidence="1">Catalyzes the conversion of 1-hydroxy-2-methyl-2-(E)-butenyl 4-diphosphate (HMBPP) into a mixture of isopentenyl diphosphate (IPP) and dimethylallyl diphosphate (DMAPP). Acts in the terminal step of the DOXP/MEP pathway for isoprenoid precursor biosynthesis.</text>
</comment>
<comment type="catalytic activity">
    <reaction evidence="1">
        <text>isopentenyl diphosphate + 2 oxidized [2Fe-2S]-[ferredoxin] + H2O = (2E)-4-hydroxy-3-methylbut-2-enyl diphosphate + 2 reduced [2Fe-2S]-[ferredoxin] + 2 H(+)</text>
        <dbReference type="Rhea" id="RHEA:24488"/>
        <dbReference type="Rhea" id="RHEA-COMP:10000"/>
        <dbReference type="Rhea" id="RHEA-COMP:10001"/>
        <dbReference type="ChEBI" id="CHEBI:15377"/>
        <dbReference type="ChEBI" id="CHEBI:15378"/>
        <dbReference type="ChEBI" id="CHEBI:33737"/>
        <dbReference type="ChEBI" id="CHEBI:33738"/>
        <dbReference type="ChEBI" id="CHEBI:128753"/>
        <dbReference type="ChEBI" id="CHEBI:128769"/>
        <dbReference type="EC" id="1.17.7.4"/>
    </reaction>
</comment>
<comment type="catalytic activity">
    <reaction evidence="1">
        <text>dimethylallyl diphosphate + 2 oxidized [2Fe-2S]-[ferredoxin] + H2O = (2E)-4-hydroxy-3-methylbut-2-enyl diphosphate + 2 reduced [2Fe-2S]-[ferredoxin] + 2 H(+)</text>
        <dbReference type="Rhea" id="RHEA:24825"/>
        <dbReference type="Rhea" id="RHEA-COMP:10000"/>
        <dbReference type="Rhea" id="RHEA-COMP:10001"/>
        <dbReference type="ChEBI" id="CHEBI:15377"/>
        <dbReference type="ChEBI" id="CHEBI:15378"/>
        <dbReference type="ChEBI" id="CHEBI:33737"/>
        <dbReference type="ChEBI" id="CHEBI:33738"/>
        <dbReference type="ChEBI" id="CHEBI:57623"/>
        <dbReference type="ChEBI" id="CHEBI:128753"/>
        <dbReference type="EC" id="1.17.7.4"/>
    </reaction>
</comment>
<comment type="cofactor">
    <cofactor evidence="1">
        <name>[4Fe-4S] cluster</name>
        <dbReference type="ChEBI" id="CHEBI:49883"/>
    </cofactor>
    <text evidence="1">Binds 1 [4Fe-4S] cluster per subunit.</text>
</comment>
<comment type="pathway">
    <text evidence="1">Isoprenoid biosynthesis; dimethylallyl diphosphate biosynthesis; dimethylallyl diphosphate from (2E)-4-hydroxy-3-methylbutenyl diphosphate: step 1/1.</text>
</comment>
<comment type="pathway">
    <text evidence="1">Isoprenoid biosynthesis; isopentenyl diphosphate biosynthesis via DXP pathway; isopentenyl diphosphate from 1-deoxy-D-xylulose 5-phosphate: step 6/6.</text>
</comment>
<comment type="similarity">
    <text evidence="1">Belongs to the IspH family.</text>
</comment>